<protein>
    <recommendedName>
        <fullName>Ester hydrolase C11orf54 homolog</fullName>
        <ecNumber evidence="1">3.1.-.-</ecNumber>
    </recommendedName>
</protein>
<dbReference type="EC" id="3.1.-.-" evidence="1"/>
<dbReference type="EMBL" id="BC074124">
    <property type="protein sequence ID" value="AAH74124.1"/>
    <property type="molecule type" value="mRNA"/>
</dbReference>
<dbReference type="RefSeq" id="NP_001086047.1">
    <property type="nucleotide sequence ID" value="NM_001092578.1"/>
</dbReference>
<dbReference type="SMR" id="Q6GME2"/>
<dbReference type="DNASU" id="444476"/>
<dbReference type="GeneID" id="444476"/>
<dbReference type="KEGG" id="xla:444476"/>
<dbReference type="AGR" id="Xenbase:XB-GENE-1010640"/>
<dbReference type="CTD" id="444476"/>
<dbReference type="Xenbase" id="XB-GENE-1010640">
    <property type="gene designation" value="c2h11orf54.L"/>
</dbReference>
<dbReference type="OMA" id="YHIMPDF"/>
<dbReference type="OrthoDB" id="5119241at2759"/>
<dbReference type="Proteomes" id="UP000186698">
    <property type="component" value="Chromosome 2L"/>
</dbReference>
<dbReference type="Bgee" id="444476">
    <property type="expression patterns" value="Expressed in kidney and 19 other cell types or tissues"/>
</dbReference>
<dbReference type="GO" id="GO:0005737">
    <property type="term" value="C:cytoplasm"/>
    <property type="evidence" value="ECO:0000250"/>
    <property type="project" value="UniProtKB"/>
</dbReference>
<dbReference type="GO" id="GO:0005634">
    <property type="term" value="C:nucleus"/>
    <property type="evidence" value="ECO:0000318"/>
    <property type="project" value="GO_Central"/>
</dbReference>
<dbReference type="GO" id="GO:0016788">
    <property type="term" value="F:hydrolase activity, acting on ester bonds"/>
    <property type="evidence" value="ECO:0000250"/>
    <property type="project" value="UniProtKB"/>
</dbReference>
<dbReference type="GO" id="GO:0008270">
    <property type="term" value="F:zinc ion binding"/>
    <property type="evidence" value="ECO:0000250"/>
    <property type="project" value="UniProtKB"/>
</dbReference>
<dbReference type="GO" id="GO:0006974">
    <property type="term" value="P:DNA damage response"/>
    <property type="evidence" value="ECO:0000250"/>
    <property type="project" value="UniProtKB"/>
</dbReference>
<dbReference type="GO" id="GO:0006282">
    <property type="term" value="P:regulation of DNA repair"/>
    <property type="evidence" value="ECO:0000250"/>
    <property type="project" value="UniProtKB"/>
</dbReference>
<dbReference type="CDD" id="cd17298">
    <property type="entry name" value="DUF1907"/>
    <property type="match status" value="1"/>
</dbReference>
<dbReference type="InterPro" id="IPR015021">
    <property type="entry name" value="C11orf54_DUF1907"/>
</dbReference>
<dbReference type="PANTHER" id="PTHR13204:SF1">
    <property type="entry name" value="ESTER HYDROLASE C11ORF54"/>
    <property type="match status" value="1"/>
</dbReference>
<dbReference type="PANTHER" id="PTHR13204">
    <property type="entry name" value="PTD012 PROTEIN"/>
    <property type="match status" value="1"/>
</dbReference>
<dbReference type="Pfam" id="PF08925">
    <property type="entry name" value="DUF1907"/>
    <property type="match status" value="1"/>
</dbReference>
<dbReference type="SMART" id="SM01168">
    <property type="entry name" value="DUF1907"/>
    <property type="match status" value="1"/>
</dbReference>
<dbReference type="SUPFAM" id="SSF117856">
    <property type="entry name" value="AF0104/ALDC/Ptd012-like"/>
    <property type="match status" value="1"/>
</dbReference>
<sequence length="316" mass="34908">MAETESCTFHVPSLEEICSILKSGLLKNFADVNVIVTECPDLTKEPFEFPVKGLCGKSRIADVGGVPYLVPMPRLDKVYNVNTVAKKIGLPGAYILGAGATSHRSLGMNAELIFSVQAESTSTLAVNKSYVASVNPGDGSCLLEKYRDRNNDNDFGLLSNLYACEGKPGKVIEVSVKRRIGQDNFVSCMRKSLKEHYGENAVGMGGTFLIKQGKAKLHVMPREYSACPLNTDEDVNGWLKFYDMTAPLICQSVFVSHDPGYDLRLEHTHCYSHHGEGGHYHYDTTPDTVEYLGYFHPAEFLYRIDKPSATHLVGRD</sequence>
<accession>Q6GME2</accession>
<comment type="function">
    <text evidence="1">Exhibits ester hydrolase activity on the substrate p-nitrophenyl acetate, in vitro. May regulate DNA damage and repair by regulating HIF1A degradation via chaperone-mediated autophagy (CMA).</text>
</comment>
<comment type="cofactor">
    <cofactor evidence="1">
        <name>Zn(2+)</name>
        <dbReference type="ChEBI" id="CHEBI:29105"/>
    </cofactor>
</comment>
<comment type="subunit">
    <text evidence="1">Monomer.</text>
</comment>
<comment type="subcellular location">
    <subcellularLocation>
        <location evidence="1">Nucleus</location>
    </subcellularLocation>
    <subcellularLocation>
        <location evidence="1">Cytoplasm</location>
    </subcellularLocation>
    <text evidence="1">Mainly located in the cytoplasm.</text>
</comment>
<organism>
    <name type="scientific">Xenopus laevis</name>
    <name type="common">African clawed frog</name>
    <dbReference type="NCBI Taxonomy" id="8355"/>
    <lineage>
        <taxon>Eukaryota</taxon>
        <taxon>Metazoa</taxon>
        <taxon>Chordata</taxon>
        <taxon>Craniata</taxon>
        <taxon>Vertebrata</taxon>
        <taxon>Euteleostomi</taxon>
        <taxon>Amphibia</taxon>
        <taxon>Batrachia</taxon>
        <taxon>Anura</taxon>
        <taxon>Pipoidea</taxon>
        <taxon>Pipidae</taxon>
        <taxon>Xenopodinae</taxon>
        <taxon>Xenopus</taxon>
        <taxon>Xenopus</taxon>
    </lineage>
</organism>
<proteinExistence type="evidence at transcript level"/>
<reference key="1">
    <citation type="submission" date="2004-06" db="EMBL/GenBank/DDBJ databases">
        <authorList>
            <consortium name="NIH - Xenopus Gene Collection (XGC) project"/>
        </authorList>
    </citation>
    <scope>NUCLEOTIDE SEQUENCE [LARGE SCALE MRNA]</scope>
    <source>
        <tissue>Kidney</tissue>
    </source>
</reference>
<name>CK054_XENLA</name>
<evidence type="ECO:0000250" key="1">
    <source>
        <dbReference type="UniProtKB" id="Q9H0W9"/>
    </source>
</evidence>
<keyword id="KW-0963">Cytoplasm</keyword>
<keyword id="KW-0378">Hydrolase</keyword>
<keyword id="KW-0479">Metal-binding</keyword>
<keyword id="KW-0539">Nucleus</keyword>
<keyword id="KW-1185">Reference proteome</keyword>
<keyword id="KW-0862">Zinc</keyword>
<feature type="chain" id="PRO_0000246033" description="Ester hydrolase C11orf54 homolog">
    <location>
        <begin position="1"/>
        <end position="316"/>
    </location>
</feature>
<feature type="binding site" evidence="1">
    <location>
        <position position="267"/>
    </location>
    <ligand>
        <name>Zn(2+)</name>
        <dbReference type="ChEBI" id="CHEBI:29105"/>
        <note>catalytic</note>
    </ligand>
</feature>
<feature type="binding site" evidence="1">
    <location>
        <position position="269"/>
    </location>
    <ligand>
        <name>Zn(2+)</name>
        <dbReference type="ChEBI" id="CHEBI:29105"/>
        <note>catalytic</note>
    </ligand>
</feature>
<feature type="binding site" evidence="1">
    <location>
        <position position="279"/>
    </location>
    <ligand>
        <name>Zn(2+)</name>
        <dbReference type="ChEBI" id="CHEBI:29105"/>
        <note>catalytic</note>
    </ligand>
</feature>